<comment type="function">
    <text evidence="1">This protein is involved in the repair of mismatches in DNA. It is possible that it carries out the mismatch recognition step. This protein has a weak ATPase activity.</text>
</comment>
<comment type="similarity">
    <text evidence="1">Belongs to the DNA mismatch repair MutS family.</text>
</comment>
<proteinExistence type="inferred from homology"/>
<name>MUTS_PARC0</name>
<gene>
    <name evidence="1" type="primary">mutS</name>
    <name type="ordered locus">Aave_2052</name>
</gene>
<protein>
    <recommendedName>
        <fullName evidence="1">DNA mismatch repair protein MutS</fullName>
    </recommendedName>
</protein>
<feature type="chain" id="PRO_0000335102" description="DNA mismatch repair protein MutS">
    <location>
        <begin position="1"/>
        <end position="890"/>
    </location>
</feature>
<feature type="region of interest" description="Disordered" evidence="2">
    <location>
        <begin position="1"/>
        <end position="23"/>
    </location>
</feature>
<feature type="compositionally biased region" description="Basic and acidic residues" evidence="2">
    <location>
        <begin position="1"/>
        <end position="13"/>
    </location>
</feature>
<feature type="binding site" evidence="1">
    <location>
        <begin position="649"/>
        <end position="656"/>
    </location>
    <ligand>
        <name>ATP</name>
        <dbReference type="ChEBI" id="CHEBI:30616"/>
    </ligand>
</feature>
<organism>
    <name type="scientific">Paracidovorax citrulli (strain AAC00-1)</name>
    <name type="common">Acidovorax citrulli</name>
    <dbReference type="NCBI Taxonomy" id="397945"/>
    <lineage>
        <taxon>Bacteria</taxon>
        <taxon>Pseudomonadati</taxon>
        <taxon>Pseudomonadota</taxon>
        <taxon>Betaproteobacteria</taxon>
        <taxon>Burkholderiales</taxon>
        <taxon>Comamonadaceae</taxon>
        <taxon>Paracidovorax</taxon>
    </lineage>
</organism>
<dbReference type="EMBL" id="CP000512">
    <property type="protein sequence ID" value="ABM32635.1"/>
    <property type="molecule type" value="Genomic_DNA"/>
</dbReference>
<dbReference type="SMR" id="A1TNU7"/>
<dbReference type="STRING" id="397945.Aave_2052"/>
<dbReference type="KEGG" id="aav:Aave_2052"/>
<dbReference type="eggNOG" id="COG0249">
    <property type="taxonomic scope" value="Bacteria"/>
</dbReference>
<dbReference type="HOGENOM" id="CLU_002472_4_0_4"/>
<dbReference type="Proteomes" id="UP000002596">
    <property type="component" value="Chromosome"/>
</dbReference>
<dbReference type="GO" id="GO:0005829">
    <property type="term" value="C:cytosol"/>
    <property type="evidence" value="ECO:0007669"/>
    <property type="project" value="TreeGrafter"/>
</dbReference>
<dbReference type="GO" id="GO:0005524">
    <property type="term" value="F:ATP binding"/>
    <property type="evidence" value="ECO:0007669"/>
    <property type="project" value="UniProtKB-UniRule"/>
</dbReference>
<dbReference type="GO" id="GO:0140664">
    <property type="term" value="F:ATP-dependent DNA damage sensor activity"/>
    <property type="evidence" value="ECO:0007669"/>
    <property type="project" value="InterPro"/>
</dbReference>
<dbReference type="GO" id="GO:0003684">
    <property type="term" value="F:damaged DNA binding"/>
    <property type="evidence" value="ECO:0007669"/>
    <property type="project" value="UniProtKB-UniRule"/>
</dbReference>
<dbReference type="GO" id="GO:0030983">
    <property type="term" value="F:mismatched DNA binding"/>
    <property type="evidence" value="ECO:0007669"/>
    <property type="project" value="InterPro"/>
</dbReference>
<dbReference type="GO" id="GO:0006298">
    <property type="term" value="P:mismatch repair"/>
    <property type="evidence" value="ECO:0007669"/>
    <property type="project" value="UniProtKB-UniRule"/>
</dbReference>
<dbReference type="FunFam" id="3.40.1170.10:FF:000001">
    <property type="entry name" value="DNA mismatch repair protein MutS"/>
    <property type="match status" value="1"/>
</dbReference>
<dbReference type="Gene3D" id="1.10.1420.10">
    <property type="match status" value="2"/>
</dbReference>
<dbReference type="Gene3D" id="6.10.140.430">
    <property type="match status" value="1"/>
</dbReference>
<dbReference type="Gene3D" id="3.40.1170.10">
    <property type="entry name" value="DNA repair protein MutS, domain I"/>
    <property type="match status" value="1"/>
</dbReference>
<dbReference type="Gene3D" id="3.30.420.110">
    <property type="entry name" value="MutS, connector domain"/>
    <property type="match status" value="1"/>
</dbReference>
<dbReference type="Gene3D" id="3.40.50.300">
    <property type="entry name" value="P-loop containing nucleotide triphosphate hydrolases"/>
    <property type="match status" value="1"/>
</dbReference>
<dbReference type="HAMAP" id="MF_00096">
    <property type="entry name" value="MutS"/>
    <property type="match status" value="1"/>
</dbReference>
<dbReference type="InterPro" id="IPR005748">
    <property type="entry name" value="DNA_mismatch_repair_MutS"/>
</dbReference>
<dbReference type="InterPro" id="IPR007695">
    <property type="entry name" value="DNA_mismatch_repair_MutS-lik_N"/>
</dbReference>
<dbReference type="InterPro" id="IPR017261">
    <property type="entry name" value="DNA_mismatch_repair_MutS/MSH"/>
</dbReference>
<dbReference type="InterPro" id="IPR000432">
    <property type="entry name" value="DNA_mismatch_repair_MutS_C"/>
</dbReference>
<dbReference type="InterPro" id="IPR007861">
    <property type="entry name" value="DNA_mismatch_repair_MutS_clamp"/>
</dbReference>
<dbReference type="InterPro" id="IPR007696">
    <property type="entry name" value="DNA_mismatch_repair_MutS_core"/>
</dbReference>
<dbReference type="InterPro" id="IPR016151">
    <property type="entry name" value="DNA_mismatch_repair_MutS_N"/>
</dbReference>
<dbReference type="InterPro" id="IPR036187">
    <property type="entry name" value="DNA_mismatch_repair_MutS_sf"/>
</dbReference>
<dbReference type="InterPro" id="IPR007860">
    <property type="entry name" value="DNA_mmatch_repair_MutS_con_dom"/>
</dbReference>
<dbReference type="InterPro" id="IPR045076">
    <property type="entry name" value="MutS"/>
</dbReference>
<dbReference type="InterPro" id="IPR036678">
    <property type="entry name" value="MutS_con_dom_sf"/>
</dbReference>
<dbReference type="InterPro" id="IPR027417">
    <property type="entry name" value="P-loop_NTPase"/>
</dbReference>
<dbReference type="NCBIfam" id="TIGR01070">
    <property type="entry name" value="mutS1"/>
    <property type="match status" value="1"/>
</dbReference>
<dbReference type="NCBIfam" id="NF003810">
    <property type="entry name" value="PRK05399.1"/>
    <property type="match status" value="1"/>
</dbReference>
<dbReference type="PANTHER" id="PTHR11361:SF34">
    <property type="entry name" value="DNA MISMATCH REPAIR PROTEIN MSH1, MITOCHONDRIAL"/>
    <property type="match status" value="1"/>
</dbReference>
<dbReference type="PANTHER" id="PTHR11361">
    <property type="entry name" value="DNA MISMATCH REPAIR PROTEIN MUTS FAMILY MEMBER"/>
    <property type="match status" value="1"/>
</dbReference>
<dbReference type="Pfam" id="PF01624">
    <property type="entry name" value="MutS_I"/>
    <property type="match status" value="1"/>
</dbReference>
<dbReference type="Pfam" id="PF05188">
    <property type="entry name" value="MutS_II"/>
    <property type="match status" value="1"/>
</dbReference>
<dbReference type="Pfam" id="PF05192">
    <property type="entry name" value="MutS_III"/>
    <property type="match status" value="1"/>
</dbReference>
<dbReference type="Pfam" id="PF05190">
    <property type="entry name" value="MutS_IV"/>
    <property type="match status" value="1"/>
</dbReference>
<dbReference type="Pfam" id="PF00488">
    <property type="entry name" value="MutS_V"/>
    <property type="match status" value="1"/>
</dbReference>
<dbReference type="PIRSF" id="PIRSF037677">
    <property type="entry name" value="DNA_mis_repair_Msh6"/>
    <property type="match status" value="1"/>
</dbReference>
<dbReference type="SMART" id="SM00534">
    <property type="entry name" value="MUTSac"/>
    <property type="match status" value="1"/>
</dbReference>
<dbReference type="SMART" id="SM00533">
    <property type="entry name" value="MUTSd"/>
    <property type="match status" value="1"/>
</dbReference>
<dbReference type="SUPFAM" id="SSF55271">
    <property type="entry name" value="DNA repair protein MutS, domain I"/>
    <property type="match status" value="1"/>
</dbReference>
<dbReference type="SUPFAM" id="SSF53150">
    <property type="entry name" value="DNA repair protein MutS, domain II"/>
    <property type="match status" value="1"/>
</dbReference>
<dbReference type="SUPFAM" id="SSF48334">
    <property type="entry name" value="DNA repair protein MutS, domain III"/>
    <property type="match status" value="1"/>
</dbReference>
<dbReference type="SUPFAM" id="SSF52540">
    <property type="entry name" value="P-loop containing nucleoside triphosphate hydrolases"/>
    <property type="match status" value="1"/>
</dbReference>
<dbReference type="PROSITE" id="PS00486">
    <property type="entry name" value="DNA_MISMATCH_REPAIR_2"/>
    <property type="match status" value="1"/>
</dbReference>
<accession>A1TNU7</accession>
<keyword id="KW-0067">ATP-binding</keyword>
<keyword id="KW-0227">DNA damage</keyword>
<keyword id="KW-0234">DNA repair</keyword>
<keyword id="KW-0238">DNA-binding</keyword>
<keyword id="KW-0547">Nucleotide-binding</keyword>
<evidence type="ECO:0000255" key="1">
    <source>
        <dbReference type="HAMAP-Rule" id="MF_00096"/>
    </source>
</evidence>
<evidence type="ECO:0000256" key="2">
    <source>
        <dbReference type="SAM" id="MobiDB-lite"/>
    </source>
</evidence>
<reference key="1">
    <citation type="submission" date="2006-12" db="EMBL/GenBank/DDBJ databases">
        <title>Complete sequence of Acidovorax avenae subsp. citrulli AAC00-1.</title>
        <authorList>
            <person name="Copeland A."/>
            <person name="Lucas S."/>
            <person name="Lapidus A."/>
            <person name="Barry K."/>
            <person name="Detter J.C."/>
            <person name="Glavina del Rio T."/>
            <person name="Dalin E."/>
            <person name="Tice H."/>
            <person name="Pitluck S."/>
            <person name="Kiss H."/>
            <person name="Brettin T."/>
            <person name="Bruce D."/>
            <person name="Han C."/>
            <person name="Tapia R."/>
            <person name="Gilna P."/>
            <person name="Schmutz J."/>
            <person name="Larimer F."/>
            <person name="Land M."/>
            <person name="Hauser L."/>
            <person name="Kyrpides N."/>
            <person name="Kim E."/>
            <person name="Stahl D."/>
            <person name="Richardson P."/>
        </authorList>
    </citation>
    <scope>NUCLEOTIDE SEQUENCE [LARGE SCALE GENOMIC DNA]</scope>
    <source>
        <strain>AAC00-1</strain>
    </source>
</reference>
<sequence length="890" mass="96806">MDKGINLQNDKEPSPMAEGNPADFSAHTPMMQQYLALKAGYPDTLVFYRMGDFYELFWADAEKAARLLDITLTQRGQSAGQPVVMAGVPFHALENYLGRLIRMGESVAICEQVGEVGAAKGPVERKVVRVVTPGTLTDSELLPDKAESMLLAVHQAPRARCGLAWLSVTQGVVHLAECTHDEVGTWIARIGPSEVIYSAGVTERFEQQLQALRQGGVLSCPLSLRPDWQFDGALGARKLLEQLGAASLNAWDAQDLAHAHAASAALLSYAEHTQGRALTHIHAVRVQKNDELIALPPATRRNLELTRTLRGEDAPTLFSLLDTCMTGMGSRLLKTWLLEPRRDRTEARARLAATAELRGDHGGTGSWQALRAALRGVSDVERITARIALRQVRPRELVALCKTLHKAEQIAAEHRWQDPLLAGISGDLHAPPACGALLAGAILEEPSALVRDGGVIADGFDAELDELRGIQNHCDDFLLALETREKARTLIPNLRVQFNKVHGFYIEVTSSYLDRIPDDYRRRQTLKNAERFITPELKAFEDKALSAQERALAREKWLYEQVLDQLQQHVPALTRAAQAIAALDALCALAERSLTLGWCAPQFAAEPCIEIEGGRHPVVEARLAETSAGAFIPNHTRLNANTRMQIITGPNMGGKSTYMRQVALIVLLASMGSHVPAAHCRLGPIDAIHTRIGAADDLANAQSTFMMEMTEAAQILHAATPHSLVLMDEIGRGTSTFDGLALASGIATHLHDRTRAFTLFATHYFELTELAARHAHAVNVHVGATESGSDIVFLHEIQPGPASRSYGIHVARLAGVPAPVLNHARHALSALEERANEGETQVDLFAPPPESEAPGISPVEAALQGIHPDSLSPREALDALYQLKRLAQPG</sequence>